<evidence type="ECO:0000255" key="1">
    <source>
        <dbReference type="HAMAP-Rule" id="MF_00167"/>
    </source>
</evidence>
<feature type="chain" id="PRO_1000076995" description="Translational regulator CsrA">
    <location>
        <begin position="1"/>
        <end position="61"/>
    </location>
</feature>
<organism>
    <name type="scientific">Salmonella paratyphi B (strain ATCC BAA-1250 / SPB7)</name>
    <dbReference type="NCBI Taxonomy" id="1016998"/>
    <lineage>
        <taxon>Bacteria</taxon>
        <taxon>Pseudomonadati</taxon>
        <taxon>Pseudomonadota</taxon>
        <taxon>Gammaproteobacteria</taxon>
        <taxon>Enterobacterales</taxon>
        <taxon>Enterobacteriaceae</taxon>
        <taxon>Salmonella</taxon>
    </lineage>
</organism>
<comment type="function">
    <text evidence="1">A key translational regulator that binds mRNA to regulate translation initiation and/or mRNA stability. Mediates global changes in gene expression, shifting from rapid growth to stress survival by linking envelope stress, the stringent response and the catabolite repression systems. Usually binds in the 5'-UTR; binding at or near the Shine-Dalgarno sequence prevents ribosome-binding, repressing translation, binding elsewhere in the 5'-UTR can activate translation and/or stabilize the mRNA. Its function is antagonized by small RNA(s).</text>
</comment>
<comment type="subunit">
    <text evidence="1">Homodimer; the beta-strands of each monomer intercalate to form a hydrophobic core, while the alpha-helices form wings that extend away from the core.</text>
</comment>
<comment type="subcellular location">
    <subcellularLocation>
        <location evidence="1">Cytoplasm</location>
    </subcellularLocation>
</comment>
<comment type="similarity">
    <text evidence="1">Belongs to the CsrA/RsmA family.</text>
</comment>
<gene>
    <name evidence="1" type="primary">csrA</name>
    <name type="ordered locus">SPAB_03513</name>
</gene>
<accession>A9N0C0</accession>
<sequence length="61" mass="6856">MLILTRRVGETLMIGDEVTVTVLGVKGNQVRIGVNAPKEVSVHREEIYQRIQAEKSQQSSY</sequence>
<reference key="1">
    <citation type="submission" date="2007-11" db="EMBL/GenBank/DDBJ databases">
        <authorList>
            <consortium name="The Salmonella enterica serovar Paratyphi B Genome Sequencing Project"/>
            <person name="McClelland M."/>
            <person name="Sanderson E.K."/>
            <person name="Porwollik S."/>
            <person name="Spieth J."/>
            <person name="Clifton W.S."/>
            <person name="Fulton R."/>
            <person name="Cordes M."/>
            <person name="Wollam A."/>
            <person name="Shah N."/>
            <person name="Pepin K."/>
            <person name="Bhonagiri V."/>
            <person name="Nash W."/>
            <person name="Johnson M."/>
            <person name="Thiruvilangam P."/>
            <person name="Wilson R."/>
        </authorList>
    </citation>
    <scope>NUCLEOTIDE SEQUENCE [LARGE SCALE GENOMIC DNA]</scope>
    <source>
        <strain>ATCC BAA-1250 / SPB7</strain>
    </source>
</reference>
<proteinExistence type="inferred from homology"/>
<keyword id="KW-0010">Activator</keyword>
<keyword id="KW-0963">Cytoplasm</keyword>
<keyword id="KW-0678">Repressor</keyword>
<keyword id="KW-0694">RNA-binding</keyword>
<keyword id="KW-0810">Translation regulation</keyword>
<name>CSRA_SALPB</name>
<dbReference type="EMBL" id="CP000886">
    <property type="protein sequence ID" value="ABX68854.1"/>
    <property type="molecule type" value="Genomic_DNA"/>
</dbReference>
<dbReference type="RefSeq" id="WP_000906486.1">
    <property type="nucleotide sequence ID" value="NC_010102.1"/>
</dbReference>
<dbReference type="SMR" id="A9N0C0"/>
<dbReference type="GeneID" id="98389839"/>
<dbReference type="KEGG" id="spq:SPAB_03513"/>
<dbReference type="PATRIC" id="fig|1016998.12.peg.3306"/>
<dbReference type="HOGENOM" id="CLU_164837_2_1_6"/>
<dbReference type="BioCyc" id="SENT1016998:SPAB_RS14310-MONOMER"/>
<dbReference type="Proteomes" id="UP000008556">
    <property type="component" value="Chromosome"/>
</dbReference>
<dbReference type="GO" id="GO:0005829">
    <property type="term" value="C:cytosol"/>
    <property type="evidence" value="ECO:0007669"/>
    <property type="project" value="TreeGrafter"/>
</dbReference>
<dbReference type="GO" id="GO:0048027">
    <property type="term" value="F:mRNA 5'-UTR binding"/>
    <property type="evidence" value="ECO:0007669"/>
    <property type="project" value="UniProtKB-UniRule"/>
</dbReference>
<dbReference type="GO" id="GO:0006402">
    <property type="term" value="P:mRNA catabolic process"/>
    <property type="evidence" value="ECO:0007669"/>
    <property type="project" value="InterPro"/>
</dbReference>
<dbReference type="GO" id="GO:0045947">
    <property type="term" value="P:negative regulation of translational initiation"/>
    <property type="evidence" value="ECO:0007669"/>
    <property type="project" value="UniProtKB-UniRule"/>
</dbReference>
<dbReference type="GO" id="GO:0045948">
    <property type="term" value="P:positive regulation of translational initiation"/>
    <property type="evidence" value="ECO:0007669"/>
    <property type="project" value="UniProtKB-UniRule"/>
</dbReference>
<dbReference type="GO" id="GO:0006109">
    <property type="term" value="P:regulation of carbohydrate metabolic process"/>
    <property type="evidence" value="ECO:0007669"/>
    <property type="project" value="UniProtKB-UniRule"/>
</dbReference>
<dbReference type="FunFam" id="2.60.40.4380:FF:000001">
    <property type="entry name" value="Translational regulator CsrA"/>
    <property type="match status" value="1"/>
</dbReference>
<dbReference type="Gene3D" id="2.60.40.4380">
    <property type="entry name" value="Translational regulator CsrA"/>
    <property type="match status" value="1"/>
</dbReference>
<dbReference type="HAMAP" id="MF_00167">
    <property type="entry name" value="CsrA"/>
    <property type="match status" value="1"/>
</dbReference>
<dbReference type="InterPro" id="IPR003751">
    <property type="entry name" value="CsrA"/>
</dbReference>
<dbReference type="InterPro" id="IPR036107">
    <property type="entry name" value="CsrA_sf"/>
</dbReference>
<dbReference type="NCBIfam" id="TIGR00202">
    <property type="entry name" value="csrA"/>
    <property type="match status" value="1"/>
</dbReference>
<dbReference type="NCBIfam" id="NF002469">
    <property type="entry name" value="PRK01712.1"/>
    <property type="match status" value="1"/>
</dbReference>
<dbReference type="PANTHER" id="PTHR34984">
    <property type="entry name" value="CARBON STORAGE REGULATOR"/>
    <property type="match status" value="1"/>
</dbReference>
<dbReference type="PANTHER" id="PTHR34984:SF1">
    <property type="entry name" value="CARBON STORAGE REGULATOR"/>
    <property type="match status" value="1"/>
</dbReference>
<dbReference type="Pfam" id="PF02599">
    <property type="entry name" value="CsrA"/>
    <property type="match status" value="1"/>
</dbReference>
<dbReference type="SUPFAM" id="SSF117130">
    <property type="entry name" value="CsrA-like"/>
    <property type="match status" value="1"/>
</dbReference>
<protein>
    <recommendedName>
        <fullName evidence="1">Translational regulator CsrA</fullName>
    </recommendedName>
    <alternativeName>
        <fullName evidence="1">Carbon storage regulator</fullName>
    </alternativeName>
</protein>